<accession>Q9X7L2</accession>
<dbReference type="EC" id="2.3.3.13" evidence="1"/>
<dbReference type="EMBL" id="AJ132004">
    <property type="protein sequence ID" value="CAB39977.1"/>
    <property type="status" value="ALT_INIT"/>
    <property type="molecule type" value="Genomic_DNA"/>
</dbReference>
<dbReference type="EMBL" id="AL591688">
    <property type="protein sequence ID" value="CAC46958.1"/>
    <property type="status" value="ALT_INIT"/>
    <property type="molecule type" value="Genomic_DNA"/>
</dbReference>
<dbReference type="RefSeq" id="NP_386485.3">
    <property type="nucleotide sequence ID" value="NC_003047.1"/>
</dbReference>
<dbReference type="SMR" id="Q9X7L2"/>
<dbReference type="EnsemblBacteria" id="CAC46958">
    <property type="protein sequence ID" value="CAC46958"/>
    <property type="gene ID" value="SMc02717"/>
</dbReference>
<dbReference type="KEGG" id="sme:SMc02717"/>
<dbReference type="PATRIC" id="fig|266834.11.peg.3862"/>
<dbReference type="eggNOG" id="COG0119">
    <property type="taxonomic scope" value="Bacteria"/>
</dbReference>
<dbReference type="HOGENOM" id="CLU_004588_3_0_5"/>
<dbReference type="OrthoDB" id="9803573at2"/>
<dbReference type="UniPathway" id="UPA00048">
    <property type="reaction ID" value="UER00070"/>
</dbReference>
<dbReference type="Proteomes" id="UP000001976">
    <property type="component" value="Chromosome"/>
</dbReference>
<dbReference type="GO" id="GO:0005737">
    <property type="term" value="C:cytoplasm"/>
    <property type="evidence" value="ECO:0007669"/>
    <property type="project" value="UniProtKB-SubCell"/>
</dbReference>
<dbReference type="GO" id="GO:0003852">
    <property type="term" value="F:2-isopropylmalate synthase activity"/>
    <property type="evidence" value="ECO:0007669"/>
    <property type="project" value="UniProtKB-UniRule"/>
</dbReference>
<dbReference type="GO" id="GO:0003985">
    <property type="term" value="F:acetyl-CoA C-acetyltransferase activity"/>
    <property type="evidence" value="ECO:0007669"/>
    <property type="project" value="UniProtKB-UniRule"/>
</dbReference>
<dbReference type="GO" id="GO:0000287">
    <property type="term" value="F:magnesium ion binding"/>
    <property type="evidence" value="ECO:0007669"/>
    <property type="project" value="UniProtKB-UniRule"/>
</dbReference>
<dbReference type="GO" id="GO:0009098">
    <property type="term" value="P:L-leucine biosynthetic process"/>
    <property type="evidence" value="ECO:0007669"/>
    <property type="project" value="UniProtKB-UniRule"/>
</dbReference>
<dbReference type="CDD" id="cd07942">
    <property type="entry name" value="DRE_TIM_LeuA"/>
    <property type="match status" value="1"/>
</dbReference>
<dbReference type="Gene3D" id="3.30.160.270">
    <property type="match status" value="1"/>
</dbReference>
<dbReference type="Gene3D" id="3.20.20.70">
    <property type="entry name" value="Aldolase class I"/>
    <property type="match status" value="1"/>
</dbReference>
<dbReference type="HAMAP" id="MF_00572">
    <property type="entry name" value="LeuA_type2"/>
    <property type="match status" value="1"/>
</dbReference>
<dbReference type="InterPro" id="IPR013709">
    <property type="entry name" value="2-isopropylmalate_synth_dimer"/>
</dbReference>
<dbReference type="InterPro" id="IPR002034">
    <property type="entry name" value="AIPM/Hcit_synth_CS"/>
</dbReference>
<dbReference type="InterPro" id="IPR013785">
    <property type="entry name" value="Aldolase_TIM"/>
</dbReference>
<dbReference type="InterPro" id="IPR005668">
    <property type="entry name" value="IPM_Synthase"/>
</dbReference>
<dbReference type="InterPro" id="IPR054692">
    <property type="entry name" value="LeuA-like_post-cat"/>
</dbReference>
<dbReference type="InterPro" id="IPR036230">
    <property type="entry name" value="LeuA_allosteric_dom_sf"/>
</dbReference>
<dbReference type="InterPro" id="IPR039371">
    <property type="entry name" value="LeuA_N_DRE-TIM"/>
</dbReference>
<dbReference type="InterPro" id="IPR000891">
    <property type="entry name" value="PYR_CT"/>
</dbReference>
<dbReference type="NCBIfam" id="TIGR00970">
    <property type="entry name" value="leuA_yeast"/>
    <property type="match status" value="1"/>
</dbReference>
<dbReference type="NCBIfam" id="NF002991">
    <property type="entry name" value="PRK03739.1"/>
    <property type="match status" value="1"/>
</dbReference>
<dbReference type="PANTHER" id="PTHR46911">
    <property type="match status" value="1"/>
</dbReference>
<dbReference type="PANTHER" id="PTHR46911:SF1">
    <property type="entry name" value="2-ISOPROPYLMALATE SYNTHASE"/>
    <property type="match status" value="1"/>
</dbReference>
<dbReference type="Pfam" id="PF00682">
    <property type="entry name" value="HMGL-like"/>
    <property type="match status" value="1"/>
</dbReference>
<dbReference type="Pfam" id="PF22615">
    <property type="entry name" value="IPMS_D2"/>
    <property type="match status" value="1"/>
</dbReference>
<dbReference type="Pfam" id="PF08502">
    <property type="entry name" value="LeuA_dimer"/>
    <property type="match status" value="1"/>
</dbReference>
<dbReference type="SMART" id="SM00917">
    <property type="entry name" value="LeuA_dimer"/>
    <property type="match status" value="1"/>
</dbReference>
<dbReference type="SUPFAM" id="SSF110921">
    <property type="entry name" value="2-isopropylmalate synthase LeuA, allosteric (dimerisation) domain"/>
    <property type="match status" value="1"/>
</dbReference>
<dbReference type="SUPFAM" id="SSF51569">
    <property type="entry name" value="Aldolase"/>
    <property type="match status" value="1"/>
</dbReference>
<dbReference type="SUPFAM" id="SSF89000">
    <property type="entry name" value="post-HMGL domain-like"/>
    <property type="match status" value="1"/>
</dbReference>
<dbReference type="PROSITE" id="PS00815">
    <property type="entry name" value="AIPM_HOMOCIT_SYNTH_1"/>
    <property type="match status" value="1"/>
</dbReference>
<dbReference type="PROSITE" id="PS00816">
    <property type="entry name" value="AIPM_HOMOCIT_SYNTH_2"/>
    <property type="match status" value="1"/>
</dbReference>
<dbReference type="PROSITE" id="PS50991">
    <property type="entry name" value="PYR_CT"/>
    <property type="match status" value="1"/>
</dbReference>
<proteinExistence type="inferred from homology"/>
<protein>
    <recommendedName>
        <fullName evidence="1">2-isopropylmalate synthase</fullName>
        <ecNumber evidence="1">2.3.3.13</ecNumber>
    </recommendedName>
    <alternativeName>
        <fullName evidence="1">Alpha-IPM synthase</fullName>
    </alternativeName>
    <alternativeName>
        <fullName evidence="1">Alpha-isopropylmalate synthase</fullName>
    </alternativeName>
</protein>
<evidence type="ECO:0000255" key="1">
    <source>
        <dbReference type="HAMAP-Rule" id="MF_00572"/>
    </source>
</evidence>
<evidence type="ECO:0000305" key="2"/>
<reference key="1">
    <citation type="journal article" date="2002" name="Arch. Microbiol.">
        <title>Involvement of the Sinorhizobium meliloti leuA gene in activation of nodulation genes by NodD1 and luteolin.</title>
        <authorList>
            <person name="Sanjuan-Pinilla J.M."/>
            <person name="Munoz S."/>
            <person name="Nogales J."/>
            <person name="Olivares J."/>
            <person name="Sanjuan J."/>
        </authorList>
    </citation>
    <scope>NUCLEOTIDE SEQUENCE [GENOMIC DNA]</scope>
    <source>
        <strain>GR4</strain>
    </source>
</reference>
<reference key="2">
    <citation type="journal article" date="2001" name="Proc. Natl. Acad. Sci. U.S.A.">
        <title>Analysis of the chromosome sequence of the legume symbiont Sinorhizobium meliloti strain 1021.</title>
        <authorList>
            <person name="Capela D."/>
            <person name="Barloy-Hubler F."/>
            <person name="Gouzy J."/>
            <person name="Bothe G."/>
            <person name="Ampe F."/>
            <person name="Batut J."/>
            <person name="Boistard P."/>
            <person name="Becker A."/>
            <person name="Boutry M."/>
            <person name="Cadieu E."/>
            <person name="Dreano S."/>
            <person name="Gloux S."/>
            <person name="Godrie T."/>
            <person name="Goffeau A."/>
            <person name="Kahn D."/>
            <person name="Kiss E."/>
            <person name="Lelaure V."/>
            <person name="Masuy D."/>
            <person name="Pohl T."/>
            <person name="Portetelle D."/>
            <person name="Puehler A."/>
            <person name="Purnelle B."/>
            <person name="Ramsperger U."/>
            <person name="Renard C."/>
            <person name="Thebault P."/>
            <person name="Vandenbol M."/>
            <person name="Weidner S."/>
            <person name="Galibert F."/>
        </authorList>
    </citation>
    <scope>NUCLEOTIDE SEQUENCE [LARGE SCALE GENOMIC DNA]</scope>
    <source>
        <strain>1021</strain>
    </source>
</reference>
<reference key="3">
    <citation type="journal article" date="2001" name="Science">
        <title>The composite genome of the legume symbiont Sinorhizobium meliloti.</title>
        <authorList>
            <person name="Galibert F."/>
            <person name="Finan T.M."/>
            <person name="Long S.R."/>
            <person name="Puehler A."/>
            <person name="Abola P."/>
            <person name="Ampe F."/>
            <person name="Barloy-Hubler F."/>
            <person name="Barnett M.J."/>
            <person name="Becker A."/>
            <person name="Boistard P."/>
            <person name="Bothe G."/>
            <person name="Boutry M."/>
            <person name="Bowser L."/>
            <person name="Buhrmester J."/>
            <person name="Cadieu E."/>
            <person name="Capela D."/>
            <person name="Chain P."/>
            <person name="Cowie A."/>
            <person name="Davis R.W."/>
            <person name="Dreano S."/>
            <person name="Federspiel N.A."/>
            <person name="Fisher R.F."/>
            <person name="Gloux S."/>
            <person name="Godrie T."/>
            <person name="Goffeau A."/>
            <person name="Golding B."/>
            <person name="Gouzy J."/>
            <person name="Gurjal M."/>
            <person name="Hernandez-Lucas I."/>
            <person name="Hong A."/>
            <person name="Huizar L."/>
            <person name="Hyman R.W."/>
            <person name="Jones T."/>
            <person name="Kahn D."/>
            <person name="Kahn M.L."/>
            <person name="Kalman S."/>
            <person name="Keating D.H."/>
            <person name="Kiss E."/>
            <person name="Komp C."/>
            <person name="Lelaure V."/>
            <person name="Masuy D."/>
            <person name="Palm C."/>
            <person name="Peck M.C."/>
            <person name="Pohl T.M."/>
            <person name="Portetelle D."/>
            <person name="Purnelle B."/>
            <person name="Ramsperger U."/>
            <person name="Surzycki R."/>
            <person name="Thebault P."/>
            <person name="Vandenbol M."/>
            <person name="Vorhoelter F.J."/>
            <person name="Weidner S."/>
            <person name="Wells D.H."/>
            <person name="Wong K."/>
            <person name="Yeh K.-C."/>
            <person name="Batut J."/>
        </authorList>
    </citation>
    <scope>NUCLEOTIDE SEQUENCE [LARGE SCALE GENOMIC DNA]</scope>
    <source>
        <strain>1021</strain>
    </source>
</reference>
<sequence length="558" mass="61751">MPEAAVKYQPYPQIVLPDRTWPSKAITEAPIWCSVDLRDGNQALVDPMGHDRKARMFHLLLDMGFKEIEIGFPSASQTDYDFARWCVEEGNVSEDVSLQVLVQCRPELIARTFEALEGAHRPIVHFYNSTSELQRRVVFGKDVAGIKQIATDAAKMITDMAAKAGGGYRFEYSPESFTGTELEVALEICNAVIEIVRPTADNKLIINLPSTVEMATPNIYADQIEWMCRNLDNRENLIVSLHPHNDRGTGIAATELGLMAGADRVEGTLFGNGERTGNVDVVTLALNMFTQGVDPKLDCSDIERIKEVYEYSNQMVIPERHPYVGELVYTAFSGSHQDAINKGMKAIKQANKPTWEVPYLPIDPRDVGRSYEAIIRINSQSGKGGIAYILQEDYGINLPRNLQIEFREEVQRITDEEGKELPSKRIHQRFIESYVEQPGARIKFVDHHTYPAGEHKGLRVVAAEITDGGETRQIEGKGTGPIDGFINALSIYLGIELSVADYSEHSLQHGSNAAAIAYVEVEYPGGKLFGVGINTNIVAASLEAIVSAANRVLDVVGK</sequence>
<feature type="chain" id="PRO_0000140442" description="2-isopropylmalate synthase">
    <location>
        <begin position="1"/>
        <end position="558"/>
    </location>
</feature>
<feature type="domain" description="Pyruvate carboxyltransferase" evidence="1">
    <location>
        <begin position="30"/>
        <end position="303"/>
    </location>
</feature>
<feature type="region of interest" description="Regulatory domain" evidence="1">
    <location>
        <begin position="437"/>
        <end position="558"/>
    </location>
</feature>
<feature type="binding site" evidence="1">
    <location>
        <position position="39"/>
    </location>
    <ligand>
        <name>Mg(2+)</name>
        <dbReference type="ChEBI" id="CHEBI:18420"/>
    </ligand>
</feature>
<feature type="binding site" evidence="1">
    <location>
        <position position="242"/>
    </location>
    <ligand>
        <name>Mg(2+)</name>
        <dbReference type="ChEBI" id="CHEBI:18420"/>
    </ligand>
</feature>
<feature type="binding site" evidence="1">
    <location>
        <position position="244"/>
    </location>
    <ligand>
        <name>Mg(2+)</name>
        <dbReference type="ChEBI" id="CHEBI:18420"/>
    </ligand>
</feature>
<feature type="binding site" evidence="1">
    <location>
        <position position="278"/>
    </location>
    <ligand>
        <name>Mg(2+)</name>
        <dbReference type="ChEBI" id="CHEBI:18420"/>
    </ligand>
</feature>
<feature type="sequence conflict" description="In Ref. 1; CAB39977." evidence="2" ref="1">
    <original>E</original>
    <variation>D</variation>
    <location>
        <position position="255"/>
    </location>
</feature>
<keyword id="KW-0028">Amino-acid biosynthesis</keyword>
<keyword id="KW-0100">Branched-chain amino acid biosynthesis</keyword>
<keyword id="KW-0963">Cytoplasm</keyword>
<keyword id="KW-0432">Leucine biosynthesis</keyword>
<keyword id="KW-0460">Magnesium</keyword>
<keyword id="KW-0479">Metal-binding</keyword>
<keyword id="KW-1185">Reference proteome</keyword>
<keyword id="KW-0808">Transferase</keyword>
<gene>
    <name evidence="1" type="primary">leuA</name>
    <name type="ordered locus">R02379</name>
    <name type="ORF">SMc02717</name>
</gene>
<comment type="function">
    <text evidence="1">Catalyzes the condensation of the acetyl group of acetyl-CoA with 3-methyl-2-oxobutanoate (2-ketoisovalerate) to form 3-carboxy-3-hydroxy-4-methylpentanoate (2-isopropylmalate).</text>
</comment>
<comment type="catalytic activity">
    <reaction evidence="1">
        <text>3-methyl-2-oxobutanoate + acetyl-CoA + H2O = (2S)-2-isopropylmalate + CoA + H(+)</text>
        <dbReference type="Rhea" id="RHEA:21524"/>
        <dbReference type="ChEBI" id="CHEBI:1178"/>
        <dbReference type="ChEBI" id="CHEBI:11851"/>
        <dbReference type="ChEBI" id="CHEBI:15377"/>
        <dbReference type="ChEBI" id="CHEBI:15378"/>
        <dbReference type="ChEBI" id="CHEBI:57287"/>
        <dbReference type="ChEBI" id="CHEBI:57288"/>
        <dbReference type="EC" id="2.3.3.13"/>
    </reaction>
</comment>
<comment type="cofactor">
    <cofactor evidence="1">
        <name>Mg(2+)</name>
        <dbReference type="ChEBI" id="CHEBI:18420"/>
    </cofactor>
</comment>
<comment type="pathway">
    <text evidence="1">Amino-acid biosynthesis; L-leucine biosynthesis; L-leucine from 3-methyl-2-oxobutanoate: step 1/4.</text>
</comment>
<comment type="subunit">
    <text evidence="1">Homodimer.</text>
</comment>
<comment type="subcellular location">
    <subcellularLocation>
        <location evidence="1">Cytoplasm</location>
    </subcellularLocation>
</comment>
<comment type="similarity">
    <text evidence="1">Belongs to the alpha-IPM synthase/homocitrate synthase family. LeuA type 2 subfamily.</text>
</comment>
<comment type="sequence caution" evidence="2">
    <conflict type="erroneous initiation">
        <sequence resource="EMBL-CDS" id="CAB39977"/>
    </conflict>
    <text>Extended N-terminus.</text>
</comment>
<comment type="sequence caution" evidence="2">
    <conflict type="erroneous initiation">
        <sequence resource="EMBL-CDS" id="CAC46958"/>
    </conflict>
    <text>Extended N-terminus.</text>
</comment>
<organism>
    <name type="scientific">Rhizobium meliloti (strain 1021)</name>
    <name type="common">Ensifer meliloti</name>
    <name type="synonym">Sinorhizobium meliloti</name>
    <dbReference type="NCBI Taxonomy" id="266834"/>
    <lineage>
        <taxon>Bacteria</taxon>
        <taxon>Pseudomonadati</taxon>
        <taxon>Pseudomonadota</taxon>
        <taxon>Alphaproteobacteria</taxon>
        <taxon>Hyphomicrobiales</taxon>
        <taxon>Rhizobiaceae</taxon>
        <taxon>Sinorhizobium/Ensifer group</taxon>
        <taxon>Sinorhizobium</taxon>
    </lineage>
</organism>
<name>LEU1_RHIME</name>